<sequence>MKRFAIEFAYDGTKFFGYQGQPNVRTVQGDLEDALERIFKERIYTQAAGRTDAGVHANGQVAAFNCPIERLTETDIKNALNANLPDDIYVKKAWVVDKSFNPRFAATKRIYHYFISTNEKDVFMRNYVWNFRYDLDIEAMRKAASFLEGEHDFSSFKKGKDEKNPVRTIYRIRILTLKKGLILIRVEGRSFLRSMVRNIVGSLVRVGLGQWKPEKILEVLEKRSRQEAAGTAPPHGLYLYKVLF</sequence>
<organism>
    <name type="scientific">Thermosipho africanus (strain TCF52B)</name>
    <dbReference type="NCBI Taxonomy" id="484019"/>
    <lineage>
        <taxon>Bacteria</taxon>
        <taxon>Thermotogati</taxon>
        <taxon>Thermotogota</taxon>
        <taxon>Thermotogae</taxon>
        <taxon>Thermotogales</taxon>
        <taxon>Fervidobacteriaceae</taxon>
        <taxon>Thermosipho</taxon>
    </lineage>
</organism>
<reference key="1">
    <citation type="journal article" date="2009" name="J. Bacteriol.">
        <title>The genome of Thermosipho africanus TCF52B: lateral genetic connections to the Firmicutes and Archaea.</title>
        <authorList>
            <person name="Nesboe C.L."/>
            <person name="Bapteste E."/>
            <person name="Curtis B."/>
            <person name="Dahle H."/>
            <person name="Lopez P."/>
            <person name="Macleod D."/>
            <person name="Dlutek M."/>
            <person name="Bowman S."/>
            <person name="Zhaxybayeva O."/>
            <person name="Birkeland N.-K."/>
            <person name="Doolittle W.F."/>
        </authorList>
    </citation>
    <scope>NUCLEOTIDE SEQUENCE [LARGE SCALE GENOMIC DNA]</scope>
    <source>
        <strain>TCF52B</strain>
    </source>
</reference>
<feature type="chain" id="PRO_1000194577" description="tRNA pseudouridine synthase A">
    <location>
        <begin position="1"/>
        <end position="244"/>
    </location>
</feature>
<feature type="active site" description="Nucleophile" evidence="1">
    <location>
        <position position="52"/>
    </location>
</feature>
<feature type="binding site" evidence="1">
    <location>
        <position position="111"/>
    </location>
    <ligand>
        <name>substrate</name>
    </ligand>
</feature>
<gene>
    <name evidence="1" type="primary">truA</name>
    <name type="ordered locus">THA_1186</name>
</gene>
<proteinExistence type="inferred from homology"/>
<accession>B7IHS2</accession>
<protein>
    <recommendedName>
        <fullName evidence="1">tRNA pseudouridine synthase A</fullName>
        <ecNumber evidence="1">5.4.99.12</ecNumber>
    </recommendedName>
    <alternativeName>
        <fullName evidence="1">tRNA pseudouridine(38-40) synthase</fullName>
    </alternativeName>
    <alternativeName>
        <fullName evidence="1">tRNA pseudouridylate synthase I</fullName>
    </alternativeName>
    <alternativeName>
        <fullName evidence="1">tRNA-uridine isomerase I</fullName>
    </alternativeName>
</protein>
<keyword id="KW-0413">Isomerase</keyword>
<keyword id="KW-1185">Reference proteome</keyword>
<keyword id="KW-0819">tRNA processing</keyword>
<name>TRUA_THEAB</name>
<comment type="function">
    <text evidence="1">Formation of pseudouridine at positions 38, 39 and 40 in the anticodon stem and loop of transfer RNAs.</text>
</comment>
<comment type="catalytic activity">
    <reaction evidence="1">
        <text>uridine(38/39/40) in tRNA = pseudouridine(38/39/40) in tRNA</text>
        <dbReference type="Rhea" id="RHEA:22376"/>
        <dbReference type="Rhea" id="RHEA-COMP:10085"/>
        <dbReference type="Rhea" id="RHEA-COMP:10087"/>
        <dbReference type="ChEBI" id="CHEBI:65314"/>
        <dbReference type="ChEBI" id="CHEBI:65315"/>
        <dbReference type="EC" id="5.4.99.12"/>
    </reaction>
</comment>
<comment type="subunit">
    <text evidence="1">Homodimer.</text>
</comment>
<comment type="similarity">
    <text evidence="1">Belongs to the tRNA pseudouridine synthase TruA family.</text>
</comment>
<evidence type="ECO:0000255" key="1">
    <source>
        <dbReference type="HAMAP-Rule" id="MF_00171"/>
    </source>
</evidence>
<dbReference type="EC" id="5.4.99.12" evidence="1"/>
<dbReference type="EMBL" id="CP001185">
    <property type="protein sequence ID" value="ACJ75636.1"/>
    <property type="molecule type" value="Genomic_DNA"/>
</dbReference>
<dbReference type="RefSeq" id="WP_012580066.1">
    <property type="nucleotide sequence ID" value="NC_011653.1"/>
</dbReference>
<dbReference type="SMR" id="B7IHS2"/>
<dbReference type="STRING" id="484019.THA_1186"/>
<dbReference type="KEGG" id="taf:THA_1186"/>
<dbReference type="eggNOG" id="COG0101">
    <property type="taxonomic scope" value="Bacteria"/>
</dbReference>
<dbReference type="HOGENOM" id="CLU_014673_0_1_0"/>
<dbReference type="OrthoDB" id="9811823at2"/>
<dbReference type="Proteomes" id="UP000002453">
    <property type="component" value="Chromosome"/>
</dbReference>
<dbReference type="GO" id="GO:0003723">
    <property type="term" value="F:RNA binding"/>
    <property type="evidence" value="ECO:0007669"/>
    <property type="project" value="InterPro"/>
</dbReference>
<dbReference type="GO" id="GO:0160147">
    <property type="term" value="F:tRNA pseudouridine(38-40) synthase activity"/>
    <property type="evidence" value="ECO:0007669"/>
    <property type="project" value="UniProtKB-EC"/>
</dbReference>
<dbReference type="GO" id="GO:0031119">
    <property type="term" value="P:tRNA pseudouridine synthesis"/>
    <property type="evidence" value="ECO:0007669"/>
    <property type="project" value="UniProtKB-UniRule"/>
</dbReference>
<dbReference type="CDD" id="cd02570">
    <property type="entry name" value="PseudoU_synth_EcTruA"/>
    <property type="match status" value="1"/>
</dbReference>
<dbReference type="FunFam" id="3.30.70.580:FF:000001">
    <property type="entry name" value="tRNA pseudouridine synthase A"/>
    <property type="match status" value="1"/>
</dbReference>
<dbReference type="Gene3D" id="3.30.70.660">
    <property type="entry name" value="Pseudouridine synthase I, catalytic domain, C-terminal subdomain"/>
    <property type="match status" value="1"/>
</dbReference>
<dbReference type="Gene3D" id="3.30.70.580">
    <property type="entry name" value="Pseudouridine synthase I, catalytic domain, N-terminal subdomain"/>
    <property type="match status" value="1"/>
</dbReference>
<dbReference type="HAMAP" id="MF_00171">
    <property type="entry name" value="TruA"/>
    <property type="match status" value="1"/>
</dbReference>
<dbReference type="InterPro" id="IPR020103">
    <property type="entry name" value="PsdUridine_synth_cat_dom_sf"/>
</dbReference>
<dbReference type="InterPro" id="IPR001406">
    <property type="entry name" value="PsdUridine_synth_TruA"/>
</dbReference>
<dbReference type="InterPro" id="IPR020097">
    <property type="entry name" value="PsdUridine_synth_TruA_a/b_dom"/>
</dbReference>
<dbReference type="InterPro" id="IPR020095">
    <property type="entry name" value="PsdUridine_synth_TruA_C"/>
</dbReference>
<dbReference type="InterPro" id="IPR020094">
    <property type="entry name" value="TruA/RsuA/RluB/E/F_N"/>
</dbReference>
<dbReference type="NCBIfam" id="TIGR00071">
    <property type="entry name" value="hisT_truA"/>
    <property type="match status" value="1"/>
</dbReference>
<dbReference type="PANTHER" id="PTHR11142">
    <property type="entry name" value="PSEUDOURIDYLATE SYNTHASE"/>
    <property type="match status" value="1"/>
</dbReference>
<dbReference type="PANTHER" id="PTHR11142:SF0">
    <property type="entry name" value="TRNA PSEUDOURIDINE SYNTHASE-LIKE 1"/>
    <property type="match status" value="1"/>
</dbReference>
<dbReference type="Pfam" id="PF01416">
    <property type="entry name" value="PseudoU_synth_1"/>
    <property type="match status" value="2"/>
</dbReference>
<dbReference type="PIRSF" id="PIRSF001430">
    <property type="entry name" value="tRNA_psdUrid_synth"/>
    <property type="match status" value="1"/>
</dbReference>
<dbReference type="SUPFAM" id="SSF55120">
    <property type="entry name" value="Pseudouridine synthase"/>
    <property type="match status" value="1"/>
</dbReference>